<accession>P0A1T2</accession>
<accession>O85137</accession>
<keyword id="KW-1185">Reference proteome</keyword>
<keyword id="KW-0690">Ribosome biogenesis</keyword>
<proteinExistence type="evidence at transcript level"/>
<feature type="chain" id="PRO_0000168815" description="Large ribosomal RNA subunit accumulation protein YceD">
    <location>
        <begin position="1"/>
        <end position="173"/>
    </location>
</feature>
<comment type="function">
    <text evidence="1">Plays a role in synthesis, processing and/or stability of 23S rRNA.</text>
</comment>
<comment type="induction">
    <text evidence="2">Part of the yceD-rpmF operon, which may continue into downstream genes.</text>
</comment>
<comment type="similarity">
    <text evidence="4">Belongs to the DUF177 domain family.</text>
</comment>
<evidence type="ECO:0000250" key="1">
    <source>
        <dbReference type="UniProtKB" id="P0AB28"/>
    </source>
</evidence>
<evidence type="ECO:0000269" key="2">
    <source>
    </source>
</evidence>
<evidence type="ECO:0000303" key="3">
    <source>
    </source>
</evidence>
<evidence type="ECO:0000305" key="4"/>
<name>YCED_SALTY</name>
<dbReference type="EMBL" id="AE006468">
    <property type="protein sequence ID" value="AAL20119.1"/>
    <property type="molecule type" value="Genomic_DNA"/>
</dbReference>
<dbReference type="EMBL" id="AF044668">
    <property type="protein sequence ID" value="AAC38645.1"/>
    <property type="molecule type" value="Genomic_DNA"/>
</dbReference>
<dbReference type="RefSeq" id="NP_460160.1">
    <property type="nucleotide sequence ID" value="NC_003197.2"/>
</dbReference>
<dbReference type="RefSeq" id="WP_001174492.1">
    <property type="nucleotide sequence ID" value="NC_003197.2"/>
</dbReference>
<dbReference type="STRING" id="99287.STM1190"/>
<dbReference type="PaxDb" id="99287-STM1190"/>
<dbReference type="GeneID" id="1252708"/>
<dbReference type="KEGG" id="stm:STM1190"/>
<dbReference type="PATRIC" id="fig|99287.12.peg.1259"/>
<dbReference type="HOGENOM" id="CLU_094127_2_1_6"/>
<dbReference type="OMA" id="HITYCFS"/>
<dbReference type="PhylomeDB" id="P0A1T2"/>
<dbReference type="BioCyc" id="SENT99287:STM1190-MONOMER"/>
<dbReference type="Proteomes" id="UP000001014">
    <property type="component" value="Chromosome"/>
</dbReference>
<dbReference type="GO" id="GO:0005829">
    <property type="term" value="C:cytosol"/>
    <property type="evidence" value="ECO:0000318"/>
    <property type="project" value="GO_Central"/>
</dbReference>
<dbReference type="GO" id="GO:0042254">
    <property type="term" value="P:ribosome biogenesis"/>
    <property type="evidence" value="ECO:0007669"/>
    <property type="project" value="UniProtKB-KW"/>
</dbReference>
<dbReference type="InterPro" id="IPR003772">
    <property type="entry name" value="YceD"/>
</dbReference>
<dbReference type="InterPro" id="IPR039255">
    <property type="entry name" value="YceD_bac"/>
</dbReference>
<dbReference type="NCBIfam" id="NF008395">
    <property type="entry name" value="PRK11193.1"/>
    <property type="match status" value="1"/>
</dbReference>
<dbReference type="PANTHER" id="PTHR38099">
    <property type="entry name" value="LARGE RIBOSOMAL RNA SUBUNIT ACCUMULATION PROTEIN YCED"/>
    <property type="match status" value="1"/>
</dbReference>
<dbReference type="PANTHER" id="PTHR38099:SF1">
    <property type="entry name" value="LARGE RIBOSOMAL RNA SUBUNIT ACCUMULATION PROTEIN YCED"/>
    <property type="match status" value="1"/>
</dbReference>
<dbReference type="Pfam" id="PF02620">
    <property type="entry name" value="YceD"/>
    <property type="match status" value="1"/>
</dbReference>
<organism>
    <name type="scientific">Salmonella typhimurium (strain LT2 / SGSC1412 / ATCC 700720)</name>
    <dbReference type="NCBI Taxonomy" id="99287"/>
    <lineage>
        <taxon>Bacteria</taxon>
        <taxon>Pseudomonadati</taxon>
        <taxon>Pseudomonadota</taxon>
        <taxon>Gammaproteobacteria</taxon>
        <taxon>Enterobacterales</taxon>
        <taxon>Enterobacteriaceae</taxon>
        <taxon>Salmonella</taxon>
    </lineage>
</organism>
<sequence>MQKVKLPLTLDPVRTAQKRLDYQGIYTPDQVERVAESVVSVDSDVECSMSFAIDNQRLAVLTGDAVVTVSLECQRCGKPFTHQVHTTYCFSPVRSDEQAEALPEAYEPIEVNEFGEIDLLATVEDEIILALPVVPVHDSEHCEVSEADMVFGELPDEAQKPNPFAVLASLKRK</sequence>
<protein>
    <recommendedName>
        <fullName>Large ribosomal RNA subunit accumulation protein YceD</fullName>
    </recommendedName>
    <alternativeName>
        <fullName>23S rRNA accumulation protein YceD</fullName>
    </alternativeName>
    <alternativeName>
        <fullName evidence="3">G30K</fullName>
    </alternativeName>
</protein>
<gene>
    <name type="primary">yceD</name>
    <name evidence="3" type="synonym">g30k</name>
    <name type="ordered locus">STM1190</name>
</gene>
<reference key="1">
    <citation type="journal article" date="2001" name="Nature">
        <title>Complete genome sequence of Salmonella enterica serovar Typhimurium LT2.</title>
        <authorList>
            <person name="McClelland M."/>
            <person name="Sanderson K.E."/>
            <person name="Spieth J."/>
            <person name="Clifton S.W."/>
            <person name="Latreille P."/>
            <person name="Courtney L."/>
            <person name="Porwollik S."/>
            <person name="Ali J."/>
            <person name="Dante M."/>
            <person name="Du F."/>
            <person name="Hou S."/>
            <person name="Layman D."/>
            <person name="Leonard S."/>
            <person name="Nguyen C."/>
            <person name="Scott K."/>
            <person name="Holmes A."/>
            <person name="Grewal N."/>
            <person name="Mulvaney E."/>
            <person name="Ryan E."/>
            <person name="Sun H."/>
            <person name="Florea L."/>
            <person name="Miller W."/>
            <person name="Stoneking T."/>
            <person name="Nhan M."/>
            <person name="Waterston R."/>
            <person name="Wilson R.K."/>
        </authorList>
    </citation>
    <scope>NUCLEOTIDE SEQUENCE [LARGE SCALE GENOMIC DNA]</scope>
    <source>
        <strain>LT2 / SGSC1412 / ATCC 700720</strain>
    </source>
</reference>
<reference key="2">
    <citation type="journal article" date="1998" name="J. Bacteriol.">
        <title>Transcriptional analysis of essential genes of the Escherichia coli fatty acid biosynthesis gene cluster by functional replacement with the analogous Salmonella typhimurium gene cluster.</title>
        <authorList>
            <person name="Zhang Y."/>
            <person name="Cronan J.E. Jr."/>
        </authorList>
    </citation>
    <scope>NUCLEOTIDE SEQUENCE [GENOMIC DNA] OF 127-173</scope>
    <scope>INDUCTION</scope>
    <source>
        <strain>LT2</strain>
    </source>
</reference>